<gene>
    <name type="ordered locus">Bcen2424_5039</name>
</gene>
<accession>A0B297</accession>
<proteinExistence type="inferred from homology"/>
<protein>
    <recommendedName>
        <fullName evidence="1">Putative ribose/galactose/methyl galactoside import ATP-binding protein 2</fullName>
        <ecNumber evidence="1">7.5.2.11</ecNumber>
        <ecNumber evidence="1">7.5.2.7</ecNumber>
    </recommendedName>
</protein>
<organism>
    <name type="scientific">Burkholderia cenocepacia (strain HI2424)</name>
    <dbReference type="NCBI Taxonomy" id="331272"/>
    <lineage>
        <taxon>Bacteria</taxon>
        <taxon>Pseudomonadati</taxon>
        <taxon>Pseudomonadota</taxon>
        <taxon>Betaproteobacteria</taxon>
        <taxon>Burkholderiales</taxon>
        <taxon>Burkholderiaceae</taxon>
        <taxon>Burkholderia</taxon>
        <taxon>Burkholderia cepacia complex</taxon>
    </lineage>
</organism>
<comment type="function">
    <text evidence="1">Part of an ABC transporter complex involved in carbohydrate import. Could be involved in ribose, galactose and/or methyl galactoside import. Responsible for energy coupling to the transport system.</text>
</comment>
<comment type="catalytic activity">
    <reaction evidence="1">
        <text>D-ribose(out) + ATP + H2O = D-ribose(in) + ADP + phosphate + H(+)</text>
        <dbReference type="Rhea" id="RHEA:29903"/>
        <dbReference type="ChEBI" id="CHEBI:15377"/>
        <dbReference type="ChEBI" id="CHEBI:15378"/>
        <dbReference type="ChEBI" id="CHEBI:30616"/>
        <dbReference type="ChEBI" id="CHEBI:43474"/>
        <dbReference type="ChEBI" id="CHEBI:47013"/>
        <dbReference type="ChEBI" id="CHEBI:456216"/>
        <dbReference type="EC" id="7.5.2.7"/>
    </reaction>
</comment>
<comment type="catalytic activity">
    <reaction evidence="1">
        <text>D-galactose(out) + ATP + H2O = D-galactose(in) + ADP + phosphate + H(+)</text>
        <dbReference type="Rhea" id="RHEA:60156"/>
        <dbReference type="ChEBI" id="CHEBI:4139"/>
        <dbReference type="ChEBI" id="CHEBI:15377"/>
        <dbReference type="ChEBI" id="CHEBI:15378"/>
        <dbReference type="ChEBI" id="CHEBI:30616"/>
        <dbReference type="ChEBI" id="CHEBI:43474"/>
        <dbReference type="ChEBI" id="CHEBI:456216"/>
        <dbReference type="EC" id="7.5.2.11"/>
    </reaction>
</comment>
<comment type="subcellular location">
    <subcellularLocation>
        <location evidence="1">Cell inner membrane</location>
        <topology evidence="1">Peripheral membrane protein</topology>
    </subcellularLocation>
</comment>
<comment type="similarity">
    <text evidence="1">Belongs to the ABC transporter superfamily. Carbohydrate importer 2 (CUT2) (TC 3.A.1.2) family.</text>
</comment>
<evidence type="ECO:0000255" key="1">
    <source>
        <dbReference type="HAMAP-Rule" id="MF_01717"/>
    </source>
</evidence>
<keyword id="KW-0067">ATP-binding</keyword>
<keyword id="KW-0997">Cell inner membrane</keyword>
<keyword id="KW-1003">Cell membrane</keyword>
<keyword id="KW-0472">Membrane</keyword>
<keyword id="KW-0547">Nucleotide-binding</keyword>
<keyword id="KW-0677">Repeat</keyword>
<keyword id="KW-0762">Sugar transport</keyword>
<keyword id="KW-1278">Translocase</keyword>
<keyword id="KW-0813">Transport</keyword>
<sequence>MQPDLNPNTTQPLIALTGIGKRFPGVQALDDCRFDLRAGEVHALMGENGAGKSTLMKILAGVYQRDAGEIRMDGRPVEIADPRAAQALGIGIIHQELNLMNHLSVAQNIFIGREPRGRFGVFVDEEKLNRDAAAIFQRMRLDLDPRTPVGRLTVAKQQMVEIAKALSFDSRALIMDEPTAALNNAEIAELFRIIRDLRAHGVGIIYISHKMDELRQIADRVTVMRDGKYVATVPMADTSMESIISMMVGRQLDTETRTPPDTSGNEIALEVRGLSRGRAIRDVGFTLRRGEILGFAGLMGAGRTEVARAVFGADPVDAGEIRVHGRAVTIRTPADAVKYGIGYLSEDRKHFGLAIGMDVQNNIALSSMRRFVRRGLFLDARGMRDAARSYVRQLAIRTPSVAQPARLLSGGNQQKIVIAKWLLRDCDILFFDEPTRGIDVGAKSEIYKLLDALAADGKAIVMISSELPEVLRMSHRILVMCEGRVTGELRAADATQEKIMQLATQRESTVLS</sequence>
<dbReference type="EC" id="7.5.2.11" evidence="1"/>
<dbReference type="EC" id="7.5.2.7" evidence="1"/>
<dbReference type="EMBL" id="CP000459">
    <property type="protein sequence ID" value="ABK11773.1"/>
    <property type="molecule type" value="Genomic_DNA"/>
</dbReference>
<dbReference type="RefSeq" id="WP_011547136.1">
    <property type="nucleotide sequence ID" value="NC_008543.1"/>
</dbReference>
<dbReference type="SMR" id="A0B297"/>
<dbReference type="KEGG" id="bch:Bcen2424_5039"/>
<dbReference type="HOGENOM" id="CLU_000604_92_3_4"/>
<dbReference type="GO" id="GO:0005886">
    <property type="term" value="C:plasma membrane"/>
    <property type="evidence" value="ECO:0007669"/>
    <property type="project" value="UniProtKB-SubCell"/>
</dbReference>
<dbReference type="GO" id="GO:0015611">
    <property type="term" value="F:ABC-type D-ribose transporter activity"/>
    <property type="evidence" value="ECO:0007669"/>
    <property type="project" value="UniProtKB-EC"/>
</dbReference>
<dbReference type="GO" id="GO:0005524">
    <property type="term" value="F:ATP binding"/>
    <property type="evidence" value="ECO:0007669"/>
    <property type="project" value="UniProtKB-KW"/>
</dbReference>
<dbReference type="GO" id="GO:0016887">
    <property type="term" value="F:ATP hydrolysis activity"/>
    <property type="evidence" value="ECO:0007669"/>
    <property type="project" value="InterPro"/>
</dbReference>
<dbReference type="CDD" id="cd03216">
    <property type="entry name" value="ABC_Carb_Monos_I"/>
    <property type="match status" value="1"/>
</dbReference>
<dbReference type="CDD" id="cd03215">
    <property type="entry name" value="ABC_Carb_Monos_II"/>
    <property type="match status" value="1"/>
</dbReference>
<dbReference type="FunFam" id="3.40.50.300:FF:000126">
    <property type="entry name" value="Galactose/methyl galactoside import ATP-binding protein MglA"/>
    <property type="match status" value="1"/>
</dbReference>
<dbReference type="FunFam" id="3.40.50.300:FF:000127">
    <property type="entry name" value="Ribose import ATP-binding protein RbsA"/>
    <property type="match status" value="1"/>
</dbReference>
<dbReference type="Gene3D" id="3.40.50.300">
    <property type="entry name" value="P-loop containing nucleotide triphosphate hydrolases"/>
    <property type="match status" value="2"/>
</dbReference>
<dbReference type="InterPro" id="IPR003593">
    <property type="entry name" value="AAA+_ATPase"/>
</dbReference>
<dbReference type="InterPro" id="IPR050107">
    <property type="entry name" value="ABC_carbohydrate_import_ATPase"/>
</dbReference>
<dbReference type="InterPro" id="IPR003439">
    <property type="entry name" value="ABC_transporter-like_ATP-bd"/>
</dbReference>
<dbReference type="InterPro" id="IPR017871">
    <property type="entry name" value="ABC_transporter-like_CS"/>
</dbReference>
<dbReference type="InterPro" id="IPR027417">
    <property type="entry name" value="P-loop_NTPase"/>
</dbReference>
<dbReference type="PANTHER" id="PTHR43790">
    <property type="entry name" value="CARBOHYDRATE TRANSPORT ATP-BINDING PROTEIN MG119-RELATED"/>
    <property type="match status" value="1"/>
</dbReference>
<dbReference type="PANTHER" id="PTHR43790:SF3">
    <property type="entry name" value="D-ALLOSE IMPORT ATP-BINDING PROTEIN ALSA-RELATED"/>
    <property type="match status" value="1"/>
</dbReference>
<dbReference type="Pfam" id="PF00005">
    <property type="entry name" value="ABC_tran"/>
    <property type="match status" value="2"/>
</dbReference>
<dbReference type="SMART" id="SM00382">
    <property type="entry name" value="AAA"/>
    <property type="match status" value="2"/>
</dbReference>
<dbReference type="SUPFAM" id="SSF52540">
    <property type="entry name" value="P-loop containing nucleoside triphosphate hydrolases"/>
    <property type="match status" value="2"/>
</dbReference>
<dbReference type="PROSITE" id="PS00211">
    <property type="entry name" value="ABC_TRANSPORTER_1"/>
    <property type="match status" value="1"/>
</dbReference>
<dbReference type="PROSITE" id="PS50893">
    <property type="entry name" value="ABC_TRANSPORTER_2"/>
    <property type="match status" value="2"/>
</dbReference>
<dbReference type="PROSITE" id="PS51260">
    <property type="entry name" value="MGLA"/>
    <property type="match status" value="1"/>
</dbReference>
<dbReference type="PROSITE" id="PS51254">
    <property type="entry name" value="RBSA"/>
    <property type="match status" value="1"/>
</dbReference>
<name>RGMG2_BURCH</name>
<feature type="chain" id="PRO_0000277554" description="Putative ribose/galactose/methyl galactoside import ATP-binding protein 2">
    <location>
        <begin position="1"/>
        <end position="512"/>
    </location>
</feature>
<feature type="domain" description="ABC transporter 1" evidence="1">
    <location>
        <begin position="14"/>
        <end position="251"/>
    </location>
</feature>
<feature type="domain" description="ABC transporter 2" evidence="1">
    <location>
        <begin position="262"/>
        <end position="507"/>
    </location>
</feature>
<feature type="binding site" evidence="1">
    <location>
        <begin position="46"/>
        <end position="53"/>
    </location>
    <ligand>
        <name>ATP</name>
        <dbReference type="ChEBI" id="CHEBI:30616"/>
    </ligand>
</feature>
<reference key="1">
    <citation type="submission" date="2006-08" db="EMBL/GenBank/DDBJ databases">
        <title>Complete sequence of chromosome 2 of Burkholderia cenocepacia HI2424.</title>
        <authorList>
            <person name="Copeland A."/>
            <person name="Lucas S."/>
            <person name="Lapidus A."/>
            <person name="Barry K."/>
            <person name="Detter J.C."/>
            <person name="Glavina del Rio T."/>
            <person name="Hammon N."/>
            <person name="Israni S."/>
            <person name="Pitluck S."/>
            <person name="Chain P."/>
            <person name="Malfatti S."/>
            <person name="Shin M."/>
            <person name="Vergez L."/>
            <person name="Schmutz J."/>
            <person name="Larimer F."/>
            <person name="Land M."/>
            <person name="Hauser L."/>
            <person name="Kyrpides N."/>
            <person name="Kim E."/>
            <person name="LiPuma J.J."/>
            <person name="Gonzalez C.F."/>
            <person name="Konstantinidis K."/>
            <person name="Tiedje J.M."/>
            <person name="Richardson P."/>
        </authorList>
    </citation>
    <scope>NUCLEOTIDE SEQUENCE [LARGE SCALE GENOMIC DNA]</scope>
    <source>
        <strain>HI2424</strain>
    </source>
</reference>